<feature type="peptide" id="PRO_0000009063" description="Fibrinopeptide B">
    <location>
        <begin position="1"/>
        <end position="21"/>
    </location>
</feature>
<feature type="region of interest" description="Disordered" evidence="4">
    <location>
        <begin position="1"/>
        <end position="21"/>
    </location>
</feature>
<feature type="compositionally biased region" description="Acidic residues" evidence="4">
    <location>
        <begin position="1"/>
        <end position="11"/>
    </location>
</feature>
<feature type="compositionally biased region" description="Basic and acidic residues" evidence="4">
    <location>
        <begin position="12"/>
        <end position="21"/>
    </location>
</feature>
<feature type="modified residue" description="Pyrrolidone carboxylic acid" evidence="5">
    <location>
        <position position="1"/>
    </location>
</feature>
<feature type="modified residue" description="Sulfotyrosine" evidence="5">
    <location>
        <position position="6"/>
    </location>
</feature>
<feature type="glycosylation site" description="O-linked (GalNAc...) threonine" evidence="3">
    <location>
        <position position="4"/>
    </location>
</feature>
<feature type="non-terminal residue">
    <location>
        <position position="21"/>
    </location>
</feature>
<reference key="1">
    <citation type="journal article" date="1967" name="Arch. Biochem. Biophys.">
        <title>Amino acid sequence studies on artiodacty fibrinopeptides.</title>
        <authorList>
            <person name="Mross G.A."/>
            <person name="Doolittle R.F."/>
        </authorList>
    </citation>
    <scope>PROTEIN SEQUENCE</scope>
    <scope>PYROGLUTAMATE FORMATION AT GLN-1</scope>
    <scope>SULFATION AT TYR-6</scope>
</reference>
<proteinExistence type="evidence at protein level"/>
<name>FIBB_CEREN</name>
<sequence>QHSTDYDEEEEDRAKLHLDAR</sequence>
<gene>
    <name type="primary">FGB</name>
</gene>
<comment type="function">
    <text evidence="1">Cleaved by the protease thrombin to yield monomers which, together with fibrinogen alpha (FGA) and fibrinogen gamma (FGG), polymerize to form an insoluble fibrin matrix. Fibrin has a major function in hemostasis as one of the primary components of blood clots. In addition, functions during the early stages of wound repair to stabilize the lesion and guide cell migration during re-epithelialization. Was originally thought to be essential for platelet aggregation, based on in vitro studies using anticoagulated blood. However subsequent studies have shown that it is not absolutely required for thrombus formation in vivo. Enhances expression of SELP in activated platelets. Maternal fibrinogen is essential for successful pregnancy. Fibrin deposition is also associated with infection, where it protects against IFNG-mediated hemorrhage. May also facilitate the antibacterial immune response via both innate and T-cell mediated pathways.</text>
</comment>
<comment type="subunit">
    <text evidence="2">Heterohexamer; disulfide linked. Contains 2 sets of 3 non-identical chains (alpha, beta and gamma). The 2 heterotrimers are in head to head conformation with the N-termini in a small central domain (By similarity).</text>
</comment>
<comment type="subcellular location">
    <subcellularLocation>
        <location>Secreted</location>
    </subcellularLocation>
</comment>
<comment type="domain">
    <text evidence="2">A long coiled coil structure formed by 3 polypeptide chains connects the central nodule to the C-terminal domains (distal nodules). The long C-terminal ends of the alpha chains fold back, contributing a fourth strand to the coiled coil structure.</text>
</comment>
<comment type="PTM">
    <text>Conversion of fibrinogen to fibrin is triggered by thrombin, which cleaves fibrinopeptides A and B from alpha and beta chains, and thus exposes the N-terminal polymerization sites responsible for the formation of the soft clot.</text>
</comment>
<protein>
    <recommendedName>
        <fullName>Fibrinogen beta chain</fullName>
    </recommendedName>
    <component>
        <recommendedName>
            <fullName>Fibrinopeptide B</fullName>
        </recommendedName>
    </component>
</protein>
<dbReference type="GlyCosmos" id="P68119">
    <property type="glycosylation" value="1 site, No reported glycans"/>
</dbReference>
<dbReference type="GO" id="GO:0005576">
    <property type="term" value="C:extracellular region"/>
    <property type="evidence" value="ECO:0007669"/>
    <property type="project" value="UniProtKB-SubCell"/>
</dbReference>
<dbReference type="GO" id="GO:0002250">
    <property type="term" value="P:adaptive immune response"/>
    <property type="evidence" value="ECO:0007669"/>
    <property type="project" value="UniProtKB-KW"/>
</dbReference>
<dbReference type="GO" id="GO:0007596">
    <property type="term" value="P:blood coagulation"/>
    <property type="evidence" value="ECO:0007669"/>
    <property type="project" value="UniProtKB-KW"/>
</dbReference>
<dbReference type="GO" id="GO:0045087">
    <property type="term" value="P:innate immune response"/>
    <property type="evidence" value="ECO:0007669"/>
    <property type="project" value="UniProtKB-KW"/>
</dbReference>
<accession>P68119</accession>
<accession>P14468</accession>
<evidence type="ECO:0000250" key="1">
    <source>
        <dbReference type="UniProtKB" id="E9PV24"/>
    </source>
</evidence>
<evidence type="ECO:0000250" key="2">
    <source>
        <dbReference type="UniProtKB" id="P02675"/>
    </source>
</evidence>
<evidence type="ECO:0000250" key="3">
    <source>
        <dbReference type="UniProtKB" id="P02676"/>
    </source>
</evidence>
<evidence type="ECO:0000256" key="4">
    <source>
        <dbReference type="SAM" id="MobiDB-lite"/>
    </source>
</evidence>
<evidence type="ECO:0000269" key="5">
    <source ref="1"/>
</evidence>
<organism>
    <name type="scientific">Cervus elaphus nelsoni</name>
    <name type="common">Rocky Mountain elk</name>
    <name type="synonym">Cervus canadensis nelsoni</name>
    <dbReference type="NCBI Taxonomy" id="9864"/>
    <lineage>
        <taxon>Eukaryota</taxon>
        <taxon>Metazoa</taxon>
        <taxon>Chordata</taxon>
        <taxon>Craniata</taxon>
        <taxon>Vertebrata</taxon>
        <taxon>Euteleostomi</taxon>
        <taxon>Mammalia</taxon>
        <taxon>Eutheria</taxon>
        <taxon>Laurasiatheria</taxon>
        <taxon>Artiodactyla</taxon>
        <taxon>Ruminantia</taxon>
        <taxon>Pecora</taxon>
        <taxon>Cervidae</taxon>
        <taxon>Cervinae</taxon>
        <taxon>Cervus</taxon>
    </lineage>
</organism>
<keyword id="KW-1064">Adaptive immunity</keyword>
<keyword id="KW-0094">Blood coagulation</keyword>
<keyword id="KW-0175">Coiled coil</keyword>
<keyword id="KW-0903">Direct protein sequencing</keyword>
<keyword id="KW-1015">Disulfide bond</keyword>
<keyword id="KW-0325">Glycoprotein</keyword>
<keyword id="KW-0356">Hemostasis</keyword>
<keyword id="KW-0391">Immunity</keyword>
<keyword id="KW-0399">Innate immunity</keyword>
<keyword id="KW-0873">Pyrrolidone carboxylic acid</keyword>
<keyword id="KW-0964">Secreted</keyword>
<keyword id="KW-0765">Sulfation</keyword>